<dbReference type="EMBL" id="AC006921">
    <property type="status" value="NOT_ANNOTATED_CDS"/>
    <property type="molecule type" value="Genomic_DNA"/>
</dbReference>
<dbReference type="EMBL" id="CP002685">
    <property type="status" value="NOT_ANNOTATED_CDS"/>
    <property type="molecule type" value="Genomic_DNA"/>
</dbReference>
<dbReference type="EMBL" id="AK222023">
    <property type="protein sequence ID" value="BAD94703.1"/>
    <property type="molecule type" value="mRNA"/>
</dbReference>
<dbReference type="EMBL" id="DQ652662">
    <property type="protein sequence ID" value="ABK28025.1"/>
    <property type="status" value="ALT_SEQ"/>
    <property type="molecule type" value="Genomic_DNA"/>
</dbReference>
<dbReference type="SMR" id="Q56WL5"/>
<dbReference type="STRING" id="3702.Q56WL5"/>
<dbReference type="Araport" id="AT2G36307"/>
<dbReference type="TAIR" id="AT2G36307"/>
<dbReference type="InParanoid" id="Q56WL5"/>
<dbReference type="PRO" id="PR:Q56WL5"/>
<dbReference type="Proteomes" id="UP000006548">
    <property type="component" value="Chromosome 2"/>
</dbReference>
<dbReference type="InterPro" id="IPR039312">
    <property type="entry name" value="ZPR"/>
</dbReference>
<dbReference type="PANTHER" id="PTHR33601">
    <property type="entry name" value="PROTEIN LITTLE ZIPPER 4"/>
    <property type="match status" value="1"/>
</dbReference>
<dbReference type="PANTHER" id="PTHR33601:SF1">
    <property type="entry name" value="PROTEIN LITTLE ZIPPER 4"/>
    <property type="match status" value="1"/>
</dbReference>
<feature type="chain" id="PRO_0000433476" description="Protein LITTLE ZIPPER 4">
    <location>
        <begin position="1"/>
        <end position="72"/>
    </location>
</feature>
<feature type="region of interest" description="Disordered" evidence="2">
    <location>
        <begin position="42"/>
        <end position="72"/>
    </location>
</feature>
<feature type="coiled-coil region" evidence="1">
    <location>
        <begin position="14"/>
        <end position="44"/>
    </location>
</feature>
<feature type="compositionally biased region" description="Low complexity" evidence="2">
    <location>
        <begin position="49"/>
        <end position="72"/>
    </location>
</feature>
<accession>Q56WL5</accession>
<accession>A0MDP6</accession>
<sequence length="72" mass="8203">MERLNSKLYLQNCYIIKENERLRKKAQILNQENQQLLFELKQKLSKTKNSSGSNQGNNNNNNNLSSSSSASG</sequence>
<comment type="function">
    <text evidence="4 8">Competitive inhibitor of the HD-ZIPIII transcription factors in shoot apical meristem (SAM) development (Probable). Acts by forming non-functional heterodimers (Probable). Part of a negative feedback loop (Probable). Essential for proper functioning of stem cells in the SAM (PubMed:18408069).</text>
</comment>
<comment type="subunit">
    <text evidence="3">Interacts with REV.</text>
</comment>
<comment type="induction">
    <text evidence="3 5">Up-regulated in response to increased HD-ZIPIII activity (PubMed:18055602). Up-regulated by REV (PubMed:22781836).</text>
</comment>
<comment type="disruption phenotype">
    <text evidence="4">Zpr3 and zpr4 double mutants exhibit homeotic transformation and ectopic meristem activity.</text>
</comment>
<comment type="sequence caution" evidence="7">
    <conflict type="erroneous termination">
        <sequence resource="EMBL-CDS" id="ABK28025"/>
    </conflict>
    <text>Extended C-terminus.</text>
</comment>
<protein>
    <recommendedName>
        <fullName evidence="6">Protein LITTLE ZIPPER 4</fullName>
    </recommendedName>
</protein>
<gene>
    <name evidence="6" type="primary">ZPR4</name>
    <name evidence="9" type="ordered locus">At2g36307</name>
    <name evidence="10" type="ORF">F2H17</name>
</gene>
<keyword id="KW-0175">Coiled coil</keyword>
<keyword id="KW-1185">Reference proteome</keyword>
<keyword id="KW-0804">Transcription</keyword>
<keyword id="KW-0805">Transcription regulation</keyword>
<reference key="1">
    <citation type="journal article" date="1999" name="Nature">
        <title>Sequence and analysis of chromosome 2 of the plant Arabidopsis thaliana.</title>
        <authorList>
            <person name="Lin X."/>
            <person name="Kaul S."/>
            <person name="Rounsley S.D."/>
            <person name="Shea T.P."/>
            <person name="Benito M.-I."/>
            <person name="Town C.D."/>
            <person name="Fujii C.Y."/>
            <person name="Mason T.M."/>
            <person name="Bowman C.L."/>
            <person name="Barnstead M.E."/>
            <person name="Feldblyum T.V."/>
            <person name="Buell C.R."/>
            <person name="Ketchum K.A."/>
            <person name="Lee J.J."/>
            <person name="Ronning C.M."/>
            <person name="Koo H.L."/>
            <person name="Moffat K.S."/>
            <person name="Cronin L.A."/>
            <person name="Shen M."/>
            <person name="Pai G."/>
            <person name="Van Aken S."/>
            <person name="Umayam L."/>
            <person name="Tallon L.J."/>
            <person name="Gill J.E."/>
            <person name="Adams M.D."/>
            <person name="Carrera A.J."/>
            <person name="Creasy T.H."/>
            <person name="Goodman H.M."/>
            <person name="Somerville C.R."/>
            <person name="Copenhaver G.P."/>
            <person name="Preuss D."/>
            <person name="Nierman W.C."/>
            <person name="White O."/>
            <person name="Eisen J.A."/>
            <person name="Salzberg S.L."/>
            <person name="Fraser C.M."/>
            <person name="Venter J.C."/>
        </authorList>
    </citation>
    <scope>NUCLEOTIDE SEQUENCE [LARGE SCALE GENOMIC DNA]</scope>
    <source>
        <strain>cv. Columbia</strain>
    </source>
</reference>
<reference key="2">
    <citation type="journal article" date="2017" name="Plant J.">
        <title>Araport11: a complete reannotation of the Arabidopsis thaliana reference genome.</title>
        <authorList>
            <person name="Cheng C.Y."/>
            <person name="Krishnakumar V."/>
            <person name="Chan A.P."/>
            <person name="Thibaud-Nissen F."/>
            <person name="Schobel S."/>
            <person name="Town C.D."/>
        </authorList>
    </citation>
    <scope>GENOME REANNOTATION</scope>
    <source>
        <strain>cv. Columbia</strain>
    </source>
</reference>
<reference key="3">
    <citation type="submission" date="2005-03" db="EMBL/GenBank/DDBJ databases">
        <title>Large-scale analysis of RIKEN Arabidopsis full-length (RAFL) cDNAs.</title>
        <authorList>
            <person name="Totoki Y."/>
            <person name="Seki M."/>
            <person name="Ishida J."/>
            <person name="Nakajima M."/>
            <person name="Enju A."/>
            <person name="Kamiya A."/>
            <person name="Narusaka M."/>
            <person name="Shin-i T."/>
            <person name="Nakagawa M."/>
            <person name="Sakamoto N."/>
            <person name="Oishi K."/>
            <person name="Kohara Y."/>
            <person name="Kobayashi M."/>
            <person name="Toyoda A."/>
            <person name="Sakaki Y."/>
            <person name="Sakurai T."/>
            <person name="Iida K."/>
            <person name="Akiyama K."/>
            <person name="Satou M."/>
            <person name="Toyoda T."/>
            <person name="Konagaya A."/>
            <person name="Carninci P."/>
            <person name="Kawai J."/>
            <person name="Hayashizaki Y."/>
            <person name="Shinozaki K."/>
        </authorList>
    </citation>
    <scope>NUCLEOTIDE SEQUENCE [LARGE SCALE MRNA]</scope>
    <source>
        <strain>cv. Columbia</strain>
    </source>
</reference>
<reference key="4">
    <citation type="journal article" date="2006" name="Plant Biotechnol. J.">
        <title>Simultaneous high-throughput recombinational cloning of open reading frames in closed and open configurations.</title>
        <authorList>
            <person name="Underwood B.A."/>
            <person name="Vanderhaeghen R."/>
            <person name="Whitford R."/>
            <person name="Town C.D."/>
            <person name="Hilson P."/>
        </authorList>
    </citation>
    <scope>NUCLEOTIDE SEQUENCE [LARGE SCALE GENOMIC DNA]</scope>
    <source>
        <strain>cv. Columbia</strain>
    </source>
</reference>
<reference key="5">
    <citation type="journal article" date="2007" name="Plant Cell">
        <title>A feedback regulatory module formed by LITTLE ZIPPER and HD-ZIPIII genes.</title>
        <authorList>
            <person name="Wenkel S."/>
            <person name="Emery J."/>
            <person name="Hou B.H."/>
            <person name="Evans M.M."/>
            <person name="Barton M.K."/>
        </authorList>
    </citation>
    <scope>GENE FAMILY</scope>
    <scope>NOMENCLATURE</scope>
    <scope>INDUCTION</scope>
    <scope>INTERACTION WITH REV</scope>
</reference>
<reference key="6">
    <citation type="journal article" date="2008" name="Plant Cell">
        <title>HD-ZIP III activity is modulated by competitive inhibitors via a feedback loop in Arabidopsis shoot apical meristem development.</title>
        <authorList>
            <person name="Kim Y.S."/>
            <person name="Kim S.G."/>
            <person name="Lee M."/>
            <person name="Lee I."/>
            <person name="Park H.Y."/>
            <person name="Seo P.J."/>
            <person name="Jung J.H."/>
            <person name="Kwon E.J."/>
            <person name="Suh S.W."/>
            <person name="Paek K.H."/>
            <person name="Park C.M."/>
        </authorList>
    </citation>
    <scope>FUNCTION</scope>
    <scope>DISRUPTION PHENOTYPE</scope>
</reference>
<reference key="7">
    <citation type="journal article" date="2011" name="EMBO Rep.">
        <title>Regulation of protein function by 'microProteins'.</title>
        <authorList>
            <person name="Staudt A.C."/>
            <person name="Wenkel S."/>
        </authorList>
    </citation>
    <scope>REVIEW</scope>
</reference>
<reference key="8">
    <citation type="journal article" date="2013" name="Mech. Dev.">
        <title>Control of stem cell homeostasis via interlocking microRNA and microProtein feedback loops.</title>
        <authorList>
            <person name="Brandt R."/>
            <person name="Xie Y."/>
            <person name="Musielak T."/>
            <person name="Graeff M."/>
            <person name="Stierhof Y.D."/>
            <person name="Huang H."/>
            <person name="Liu C.M."/>
            <person name="Wenkel S."/>
        </authorList>
    </citation>
    <scope>INDUCTION BY REV</scope>
</reference>
<reference key="9">
    <citation type="journal article" date="2014" name="Mol. Phylogenet. Evol.">
        <title>Origin of a novel regulatory module by duplication and degeneration of an ancient plant transcription factor.</title>
        <authorList>
            <person name="Floyd S.K."/>
            <person name="Ryan J.G."/>
            <person name="Conway S.J."/>
            <person name="Brenner E."/>
            <person name="Burris K.P."/>
            <person name="Burris J.N."/>
            <person name="Chen T."/>
            <person name="Edger P.P."/>
            <person name="Graham S.W."/>
            <person name="Leebens-Mack J.H."/>
            <person name="Pires J.C."/>
            <person name="Rothfels C.J."/>
            <person name="Sigel E.M."/>
            <person name="Stevenson D.W."/>
            <person name="Neal Stewart C. Jr."/>
            <person name="Wong G.K."/>
            <person name="Bowman J.L."/>
        </authorList>
    </citation>
    <scope>GENE FAMILY</scope>
</reference>
<name>ZPR4_ARATH</name>
<organism evidence="11">
    <name type="scientific">Arabidopsis thaliana</name>
    <name type="common">Mouse-ear cress</name>
    <dbReference type="NCBI Taxonomy" id="3702"/>
    <lineage>
        <taxon>Eukaryota</taxon>
        <taxon>Viridiplantae</taxon>
        <taxon>Streptophyta</taxon>
        <taxon>Embryophyta</taxon>
        <taxon>Tracheophyta</taxon>
        <taxon>Spermatophyta</taxon>
        <taxon>Magnoliopsida</taxon>
        <taxon>eudicotyledons</taxon>
        <taxon>Gunneridae</taxon>
        <taxon>Pentapetalae</taxon>
        <taxon>rosids</taxon>
        <taxon>malvids</taxon>
        <taxon>Brassicales</taxon>
        <taxon>Brassicaceae</taxon>
        <taxon>Camelineae</taxon>
        <taxon>Arabidopsis</taxon>
    </lineage>
</organism>
<evidence type="ECO:0000255" key="1"/>
<evidence type="ECO:0000256" key="2">
    <source>
        <dbReference type="SAM" id="MobiDB-lite"/>
    </source>
</evidence>
<evidence type="ECO:0000269" key="3">
    <source>
    </source>
</evidence>
<evidence type="ECO:0000269" key="4">
    <source>
    </source>
</evidence>
<evidence type="ECO:0000269" key="5">
    <source>
    </source>
</evidence>
<evidence type="ECO:0000303" key="6">
    <source>
    </source>
</evidence>
<evidence type="ECO:0000305" key="7"/>
<evidence type="ECO:0000305" key="8">
    <source>
    </source>
</evidence>
<evidence type="ECO:0000312" key="9">
    <source>
        <dbReference type="Araport" id="AT2G36307"/>
    </source>
</evidence>
<evidence type="ECO:0000312" key="10">
    <source>
        <dbReference type="EMBL" id="AC006921"/>
    </source>
</evidence>
<evidence type="ECO:0000312" key="11">
    <source>
        <dbReference type="EMBL" id="BAD94703.1"/>
    </source>
</evidence>
<proteinExistence type="evidence at protein level"/>